<feature type="chain" id="PRO_1000043188" description="3-dehydroquinate dehydratase">
    <location>
        <begin position="1"/>
        <end position="238"/>
    </location>
</feature>
<feature type="active site" description="Proton donor/acceptor" evidence="1">
    <location>
        <position position="133"/>
    </location>
</feature>
<feature type="active site" description="Schiff-base intermediate with substrate" evidence="1">
    <location>
        <position position="160"/>
    </location>
</feature>
<feature type="binding site" evidence="1">
    <location>
        <begin position="35"/>
        <end position="37"/>
    </location>
    <ligand>
        <name>3-dehydroquinate</name>
        <dbReference type="ChEBI" id="CHEBI:32364"/>
    </ligand>
</feature>
<feature type="binding site" evidence="1">
    <location>
        <position position="70"/>
    </location>
    <ligand>
        <name>3-dehydroquinate</name>
        <dbReference type="ChEBI" id="CHEBI:32364"/>
    </ligand>
</feature>
<feature type="binding site" evidence="1">
    <location>
        <position position="202"/>
    </location>
    <ligand>
        <name>3-dehydroquinate</name>
        <dbReference type="ChEBI" id="CHEBI:32364"/>
    </ligand>
</feature>
<feature type="binding site" evidence="1">
    <location>
        <position position="225"/>
    </location>
    <ligand>
        <name>3-dehydroquinate</name>
        <dbReference type="ChEBI" id="CHEBI:32364"/>
    </ligand>
</feature>
<protein>
    <recommendedName>
        <fullName evidence="1">3-dehydroquinate dehydratase</fullName>
        <shortName evidence="1">3-dehydroquinase</shortName>
        <ecNumber evidence="1">4.2.1.10</ecNumber>
    </recommendedName>
    <alternativeName>
        <fullName evidence="1">Type I DHQase</fullName>
    </alternativeName>
    <alternativeName>
        <fullName evidence="1">Type I dehydroquinase</fullName>
        <shortName evidence="1">DHQ1</shortName>
    </alternativeName>
</protein>
<comment type="function">
    <text evidence="1">Involved in the third step of the chorismate pathway, which leads to the biosynthesis of aromatic amino acids. Catalyzes the cis-dehydration of 3-dehydroquinate (DHQ) and introduces the first double bond of the aromatic ring to yield 3-dehydroshikimate.</text>
</comment>
<comment type="catalytic activity">
    <reaction evidence="1">
        <text>3-dehydroquinate = 3-dehydroshikimate + H2O</text>
        <dbReference type="Rhea" id="RHEA:21096"/>
        <dbReference type="ChEBI" id="CHEBI:15377"/>
        <dbReference type="ChEBI" id="CHEBI:16630"/>
        <dbReference type="ChEBI" id="CHEBI:32364"/>
        <dbReference type="EC" id="4.2.1.10"/>
    </reaction>
</comment>
<comment type="pathway">
    <text evidence="1">Metabolic intermediate biosynthesis; chorismate biosynthesis; chorismate from D-erythrose 4-phosphate and phosphoenolpyruvate: step 3/7.</text>
</comment>
<comment type="subunit">
    <text evidence="1">Homodimer.</text>
</comment>
<comment type="similarity">
    <text evidence="1">Belongs to the type-I 3-dehydroquinase family.</text>
</comment>
<sequence>MTHVEVVATIAPQLYIEETLIQKINHRIDAIDVLELRIDQIENVTVNQVAEMITKLKVMQDSFKLLVTYRTKLQGGYGQFTNDLYLNLISDLANINGIDMIDIEWQADIDIEKHQRIITHLQQYNKEVVISHHNFESTPPLDELQFIFFKMQKFNPEYVKLAVMPHNKNDVLNLLQAMSTFSDTMDCKVVGISMSKLGLISRTAQGVFGGALTYGCIGEPQAPGQIDVTDLKAQVTLY</sequence>
<reference key="1">
    <citation type="journal article" date="2007" name="PLoS ONE">
        <title>Molecular correlates of host specialization in Staphylococcus aureus.</title>
        <authorList>
            <person name="Herron-Olson L."/>
            <person name="Fitzgerald J.R."/>
            <person name="Musser J.M."/>
            <person name="Kapur V."/>
        </authorList>
    </citation>
    <scope>NUCLEOTIDE SEQUENCE [LARGE SCALE GENOMIC DNA]</scope>
    <source>
        <strain>bovine RF122 / ET3-1</strain>
    </source>
</reference>
<gene>
    <name evidence="1" type="primary">aroD</name>
    <name type="ordered locus">SAB0760</name>
</gene>
<organism>
    <name type="scientific">Staphylococcus aureus (strain bovine RF122 / ET3-1)</name>
    <dbReference type="NCBI Taxonomy" id="273036"/>
    <lineage>
        <taxon>Bacteria</taxon>
        <taxon>Bacillati</taxon>
        <taxon>Bacillota</taxon>
        <taxon>Bacilli</taxon>
        <taxon>Bacillales</taxon>
        <taxon>Staphylococcaceae</taxon>
        <taxon>Staphylococcus</taxon>
    </lineage>
</organism>
<proteinExistence type="evidence at protein level"/>
<keyword id="KW-0002">3D-structure</keyword>
<keyword id="KW-0028">Amino-acid biosynthesis</keyword>
<keyword id="KW-0057">Aromatic amino acid biosynthesis</keyword>
<keyword id="KW-0456">Lyase</keyword>
<keyword id="KW-0704">Schiff base</keyword>
<accession>Q2YWJ9</accession>
<evidence type="ECO:0000255" key="1">
    <source>
        <dbReference type="HAMAP-Rule" id="MF_00214"/>
    </source>
</evidence>
<name>AROD_STAAB</name>
<dbReference type="EC" id="4.2.1.10" evidence="1"/>
<dbReference type="EMBL" id="AJ938182">
    <property type="protein sequence ID" value="CAI80448.1"/>
    <property type="molecule type" value="Genomic_DNA"/>
</dbReference>
<dbReference type="RefSeq" id="WP_000150029.1">
    <property type="nucleotide sequence ID" value="NC_007622.1"/>
</dbReference>
<dbReference type="PDB" id="8B2A">
    <property type="method" value="X-ray"/>
    <property type="resolution" value="1.65 A"/>
    <property type="chains" value="AAA/BBB=1-238"/>
</dbReference>
<dbReference type="PDBsum" id="8B2A"/>
<dbReference type="SMR" id="Q2YWJ9"/>
<dbReference type="KEGG" id="sab:SAB0760"/>
<dbReference type="HOGENOM" id="CLU_064444_0_0_9"/>
<dbReference type="UniPathway" id="UPA00053">
    <property type="reaction ID" value="UER00086"/>
</dbReference>
<dbReference type="GO" id="GO:0003855">
    <property type="term" value="F:3-dehydroquinate dehydratase activity"/>
    <property type="evidence" value="ECO:0007669"/>
    <property type="project" value="UniProtKB-UniRule"/>
</dbReference>
<dbReference type="GO" id="GO:0046279">
    <property type="term" value="P:3,4-dihydroxybenzoate biosynthetic process"/>
    <property type="evidence" value="ECO:0007669"/>
    <property type="project" value="TreeGrafter"/>
</dbReference>
<dbReference type="GO" id="GO:0008652">
    <property type="term" value="P:amino acid biosynthetic process"/>
    <property type="evidence" value="ECO:0007669"/>
    <property type="project" value="UniProtKB-KW"/>
</dbReference>
<dbReference type="GO" id="GO:0009073">
    <property type="term" value="P:aromatic amino acid family biosynthetic process"/>
    <property type="evidence" value="ECO:0007669"/>
    <property type="project" value="UniProtKB-KW"/>
</dbReference>
<dbReference type="GO" id="GO:0009423">
    <property type="term" value="P:chorismate biosynthetic process"/>
    <property type="evidence" value="ECO:0007669"/>
    <property type="project" value="UniProtKB-UniRule"/>
</dbReference>
<dbReference type="CDD" id="cd00502">
    <property type="entry name" value="DHQase_I"/>
    <property type="match status" value="1"/>
</dbReference>
<dbReference type="FunFam" id="3.20.20.70:FF:000216">
    <property type="entry name" value="3-dehydroquinate dehydratase"/>
    <property type="match status" value="1"/>
</dbReference>
<dbReference type="Gene3D" id="3.20.20.70">
    <property type="entry name" value="Aldolase class I"/>
    <property type="match status" value="1"/>
</dbReference>
<dbReference type="HAMAP" id="MF_00214">
    <property type="entry name" value="AroD"/>
    <property type="match status" value="1"/>
</dbReference>
<dbReference type="InterPro" id="IPR013785">
    <property type="entry name" value="Aldolase_TIM"/>
</dbReference>
<dbReference type="InterPro" id="IPR001381">
    <property type="entry name" value="DHquinase_I"/>
</dbReference>
<dbReference type="InterPro" id="IPR050146">
    <property type="entry name" value="Type-I_3-dehydroquinase"/>
</dbReference>
<dbReference type="NCBIfam" id="TIGR01093">
    <property type="entry name" value="aroD"/>
    <property type="match status" value="1"/>
</dbReference>
<dbReference type="PANTHER" id="PTHR43699">
    <property type="entry name" value="3-DEHYDROQUINATE DEHYDRATASE"/>
    <property type="match status" value="1"/>
</dbReference>
<dbReference type="PANTHER" id="PTHR43699:SF1">
    <property type="entry name" value="3-DEHYDROQUINATE DEHYDRATASE"/>
    <property type="match status" value="1"/>
</dbReference>
<dbReference type="Pfam" id="PF01487">
    <property type="entry name" value="DHquinase_I"/>
    <property type="match status" value="1"/>
</dbReference>
<dbReference type="SUPFAM" id="SSF51569">
    <property type="entry name" value="Aldolase"/>
    <property type="match status" value="1"/>
</dbReference>